<proteinExistence type="inferred from homology"/>
<comment type="similarity">
    <text evidence="1">Belongs to the bacterial ribosomal protein bL27 family.</text>
</comment>
<keyword id="KW-0687">Ribonucleoprotein</keyword>
<keyword id="KW-0689">Ribosomal protein</keyword>
<protein>
    <recommendedName>
        <fullName evidence="1">Large ribosomal subunit protein bL27</fullName>
    </recommendedName>
    <alternativeName>
        <fullName evidence="3">50S ribosomal protein L27</fullName>
    </alternativeName>
</protein>
<name>RL27_TROW8</name>
<feature type="chain" id="PRO_0000181198" description="Large ribosomal subunit protein bL27">
    <location>
        <begin position="1"/>
        <end position="82"/>
    </location>
</feature>
<feature type="region of interest" description="Disordered" evidence="2">
    <location>
        <begin position="1"/>
        <end position="21"/>
    </location>
</feature>
<dbReference type="EMBL" id="BX251411">
    <property type="protein sequence ID" value="CAD66967.1"/>
    <property type="molecule type" value="Genomic_DNA"/>
</dbReference>
<dbReference type="RefSeq" id="WP_011096247.1">
    <property type="nucleotide sequence ID" value="NC_004551.1"/>
</dbReference>
<dbReference type="SMR" id="Q83I11"/>
<dbReference type="GeneID" id="67388069"/>
<dbReference type="KEGG" id="tws:TW293"/>
<dbReference type="HOGENOM" id="CLU_095424_4_0_11"/>
<dbReference type="GO" id="GO:0022625">
    <property type="term" value="C:cytosolic large ribosomal subunit"/>
    <property type="evidence" value="ECO:0007669"/>
    <property type="project" value="TreeGrafter"/>
</dbReference>
<dbReference type="GO" id="GO:0003735">
    <property type="term" value="F:structural constituent of ribosome"/>
    <property type="evidence" value="ECO:0007669"/>
    <property type="project" value="InterPro"/>
</dbReference>
<dbReference type="GO" id="GO:0006412">
    <property type="term" value="P:translation"/>
    <property type="evidence" value="ECO:0007669"/>
    <property type="project" value="UniProtKB-UniRule"/>
</dbReference>
<dbReference type="FunFam" id="2.40.50.100:FF:000020">
    <property type="entry name" value="50S ribosomal protein L27"/>
    <property type="match status" value="1"/>
</dbReference>
<dbReference type="Gene3D" id="2.40.50.100">
    <property type="match status" value="1"/>
</dbReference>
<dbReference type="HAMAP" id="MF_00539">
    <property type="entry name" value="Ribosomal_bL27"/>
    <property type="match status" value="1"/>
</dbReference>
<dbReference type="InterPro" id="IPR001684">
    <property type="entry name" value="Ribosomal_bL27"/>
</dbReference>
<dbReference type="InterPro" id="IPR018261">
    <property type="entry name" value="Ribosomal_bL27_CS"/>
</dbReference>
<dbReference type="NCBIfam" id="TIGR00062">
    <property type="entry name" value="L27"/>
    <property type="match status" value="1"/>
</dbReference>
<dbReference type="PANTHER" id="PTHR15893:SF0">
    <property type="entry name" value="LARGE RIBOSOMAL SUBUNIT PROTEIN BL27M"/>
    <property type="match status" value="1"/>
</dbReference>
<dbReference type="PANTHER" id="PTHR15893">
    <property type="entry name" value="RIBOSOMAL PROTEIN L27"/>
    <property type="match status" value="1"/>
</dbReference>
<dbReference type="Pfam" id="PF01016">
    <property type="entry name" value="Ribosomal_L27"/>
    <property type="match status" value="1"/>
</dbReference>
<dbReference type="PRINTS" id="PR00063">
    <property type="entry name" value="RIBOSOMALL27"/>
</dbReference>
<dbReference type="SUPFAM" id="SSF110324">
    <property type="entry name" value="Ribosomal L27 protein-like"/>
    <property type="match status" value="1"/>
</dbReference>
<dbReference type="PROSITE" id="PS00831">
    <property type="entry name" value="RIBOSOMAL_L27"/>
    <property type="match status" value="1"/>
</dbReference>
<evidence type="ECO:0000255" key="1">
    <source>
        <dbReference type="HAMAP-Rule" id="MF_00539"/>
    </source>
</evidence>
<evidence type="ECO:0000256" key="2">
    <source>
        <dbReference type="SAM" id="MobiDB-lite"/>
    </source>
</evidence>
<evidence type="ECO:0000305" key="3"/>
<gene>
    <name evidence="1" type="primary">rpmA</name>
    <name type="ordered locus">TW293</name>
</gene>
<organism>
    <name type="scientific">Tropheryma whipplei (strain TW08/27)</name>
    <name type="common">Whipple's bacillus</name>
    <dbReference type="NCBI Taxonomy" id="218496"/>
    <lineage>
        <taxon>Bacteria</taxon>
        <taxon>Bacillati</taxon>
        <taxon>Actinomycetota</taxon>
        <taxon>Actinomycetes</taxon>
        <taxon>Micrococcales</taxon>
        <taxon>Tropherymataceae</taxon>
        <taxon>Tropheryma</taxon>
    </lineage>
</organism>
<reference key="1">
    <citation type="journal article" date="2003" name="Lancet">
        <title>Sequencing and analysis of the genome of the Whipple's disease bacterium Tropheryma whipplei.</title>
        <authorList>
            <person name="Bentley S.D."/>
            <person name="Maiwald M."/>
            <person name="Murphy L.D."/>
            <person name="Pallen M.J."/>
            <person name="Yeats C.A."/>
            <person name="Dover L.G."/>
            <person name="Norbertczak H.T."/>
            <person name="Besra G.S."/>
            <person name="Quail M.A."/>
            <person name="Harris D.E."/>
            <person name="von Herbay A."/>
            <person name="Goble A."/>
            <person name="Rutter S."/>
            <person name="Squares R."/>
            <person name="Squares S."/>
            <person name="Barrell B.G."/>
            <person name="Parkhill J."/>
            <person name="Relman D.A."/>
        </authorList>
    </citation>
    <scope>NUCLEOTIDE SEQUENCE [LARGE SCALE GENOMIC DNA]</scope>
    <source>
        <strain>TW08/27</strain>
    </source>
</reference>
<sequence length="82" mass="8886">MAHKKGASSSRNGRDSNAKRLGVKRFAGQVVSAGEILVRQRGTRFHPGTNVRRGDDDTLFACASGRVRFGRSGKRRAVSVDT</sequence>
<accession>Q83I11</accession>